<protein>
    <recommendedName>
        <fullName evidence="1">Ribonuclease P protein component</fullName>
        <shortName evidence="1">RNase P protein</shortName>
        <shortName evidence="1">RNaseP protein</shortName>
        <ecNumber evidence="1">3.1.26.5</ecNumber>
    </recommendedName>
    <alternativeName>
        <fullName evidence="1">Protein C5</fullName>
    </alternativeName>
</protein>
<feature type="chain" id="PRO_1000021456" description="Ribonuclease P protein component">
    <location>
        <begin position="1"/>
        <end position="118"/>
    </location>
</feature>
<gene>
    <name evidence="1" type="primary">rnpA</name>
    <name type="ordered locus">Sbal_4382</name>
</gene>
<dbReference type="EC" id="3.1.26.5" evidence="1"/>
<dbReference type="EMBL" id="CP000563">
    <property type="protein sequence ID" value="ABN63843.1"/>
    <property type="molecule type" value="Genomic_DNA"/>
</dbReference>
<dbReference type="RefSeq" id="WP_006083828.1">
    <property type="nucleotide sequence ID" value="NC_009052.1"/>
</dbReference>
<dbReference type="SMR" id="A3DAT0"/>
<dbReference type="STRING" id="325240.Sbal_4382"/>
<dbReference type="GeneID" id="11774477"/>
<dbReference type="KEGG" id="sbl:Sbal_4382"/>
<dbReference type="HOGENOM" id="CLU_117179_11_0_6"/>
<dbReference type="OrthoDB" id="9796422at2"/>
<dbReference type="Proteomes" id="UP000001557">
    <property type="component" value="Chromosome"/>
</dbReference>
<dbReference type="GO" id="GO:0030677">
    <property type="term" value="C:ribonuclease P complex"/>
    <property type="evidence" value="ECO:0007669"/>
    <property type="project" value="TreeGrafter"/>
</dbReference>
<dbReference type="GO" id="GO:0042781">
    <property type="term" value="F:3'-tRNA processing endoribonuclease activity"/>
    <property type="evidence" value="ECO:0007669"/>
    <property type="project" value="TreeGrafter"/>
</dbReference>
<dbReference type="GO" id="GO:0004526">
    <property type="term" value="F:ribonuclease P activity"/>
    <property type="evidence" value="ECO:0007669"/>
    <property type="project" value="UniProtKB-UniRule"/>
</dbReference>
<dbReference type="GO" id="GO:0000049">
    <property type="term" value="F:tRNA binding"/>
    <property type="evidence" value="ECO:0007669"/>
    <property type="project" value="UniProtKB-UniRule"/>
</dbReference>
<dbReference type="GO" id="GO:0001682">
    <property type="term" value="P:tRNA 5'-leader removal"/>
    <property type="evidence" value="ECO:0007669"/>
    <property type="project" value="UniProtKB-UniRule"/>
</dbReference>
<dbReference type="FunFam" id="3.30.230.10:FF:000016">
    <property type="entry name" value="Ribonuclease P protein component"/>
    <property type="match status" value="1"/>
</dbReference>
<dbReference type="Gene3D" id="3.30.230.10">
    <property type="match status" value="1"/>
</dbReference>
<dbReference type="HAMAP" id="MF_00227">
    <property type="entry name" value="RNase_P"/>
    <property type="match status" value="1"/>
</dbReference>
<dbReference type="InterPro" id="IPR020568">
    <property type="entry name" value="Ribosomal_Su5_D2-typ_SF"/>
</dbReference>
<dbReference type="InterPro" id="IPR014721">
    <property type="entry name" value="Ribsml_uS5_D2-typ_fold_subgr"/>
</dbReference>
<dbReference type="InterPro" id="IPR000100">
    <property type="entry name" value="RNase_P"/>
</dbReference>
<dbReference type="InterPro" id="IPR020539">
    <property type="entry name" value="RNase_P_CS"/>
</dbReference>
<dbReference type="NCBIfam" id="TIGR00188">
    <property type="entry name" value="rnpA"/>
    <property type="match status" value="1"/>
</dbReference>
<dbReference type="PANTHER" id="PTHR33992">
    <property type="entry name" value="RIBONUCLEASE P PROTEIN COMPONENT"/>
    <property type="match status" value="1"/>
</dbReference>
<dbReference type="PANTHER" id="PTHR33992:SF1">
    <property type="entry name" value="RIBONUCLEASE P PROTEIN COMPONENT"/>
    <property type="match status" value="1"/>
</dbReference>
<dbReference type="Pfam" id="PF00825">
    <property type="entry name" value="Ribonuclease_P"/>
    <property type="match status" value="1"/>
</dbReference>
<dbReference type="SUPFAM" id="SSF54211">
    <property type="entry name" value="Ribosomal protein S5 domain 2-like"/>
    <property type="match status" value="1"/>
</dbReference>
<dbReference type="PROSITE" id="PS00648">
    <property type="entry name" value="RIBONUCLEASE_P"/>
    <property type="match status" value="1"/>
</dbReference>
<sequence length="118" mass="13830">MTSYTFSRELRLLTPAQFKSVFSNPIKASSAEITLLAIPNTEQHPRMGLTVAKRFVKRANQRNRIKRVIRDSFRLNQHDIPHLDIVVLVRNGVMEMENAEINKLIEKLWRKLSRRYNG</sequence>
<name>RNPA_SHEB5</name>
<accession>A3DAT0</accession>
<proteinExistence type="inferred from homology"/>
<keyword id="KW-0255">Endonuclease</keyword>
<keyword id="KW-0378">Hydrolase</keyword>
<keyword id="KW-0540">Nuclease</keyword>
<keyword id="KW-1185">Reference proteome</keyword>
<keyword id="KW-0694">RNA-binding</keyword>
<keyword id="KW-0819">tRNA processing</keyword>
<comment type="function">
    <text evidence="1">RNaseP catalyzes the removal of the 5'-leader sequence from pre-tRNA to produce the mature 5'-terminus. It can also cleave other RNA substrates such as 4.5S RNA. The protein component plays an auxiliary but essential role in vivo by binding to the 5'-leader sequence and broadening the substrate specificity of the ribozyme.</text>
</comment>
<comment type="catalytic activity">
    <reaction evidence="1">
        <text>Endonucleolytic cleavage of RNA, removing 5'-extranucleotides from tRNA precursor.</text>
        <dbReference type="EC" id="3.1.26.5"/>
    </reaction>
</comment>
<comment type="subunit">
    <text evidence="1">Consists of a catalytic RNA component (M1 or rnpB) and a protein subunit.</text>
</comment>
<comment type="similarity">
    <text evidence="1">Belongs to the RnpA family.</text>
</comment>
<organism>
    <name type="scientific">Shewanella baltica (strain OS155 / ATCC BAA-1091)</name>
    <dbReference type="NCBI Taxonomy" id="325240"/>
    <lineage>
        <taxon>Bacteria</taxon>
        <taxon>Pseudomonadati</taxon>
        <taxon>Pseudomonadota</taxon>
        <taxon>Gammaproteobacteria</taxon>
        <taxon>Alteromonadales</taxon>
        <taxon>Shewanellaceae</taxon>
        <taxon>Shewanella</taxon>
    </lineage>
</organism>
<evidence type="ECO:0000255" key="1">
    <source>
        <dbReference type="HAMAP-Rule" id="MF_00227"/>
    </source>
</evidence>
<reference key="1">
    <citation type="submission" date="2007-02" db="EMBL/GenBank/DDBJ databases">
        <title>Complete sequence of chromosome of Shewanella baltica OS155.</title>
        <authorList>
            <consortium name="US DOE Joint Genome Institute"/>
            <person name="Copeland A."/>
            <person name="Lucas S."/>
            <person name="Lapidus A."/>
            <person name="Barry K."/>
            <person name="Detter J.C."/>
            <person name="Glavina del Rio T."/>
            <person name="Hammon N."/>
            <person name="Israni S."/>
            <person name="Dalin E."/>
            <person name="Tice H."/>
            <person name="Pitluck S."/>
            <person name="Sims D.R."/>
            <person name="Brettin T."/>
            <person name="Bruce D."/>
            <person name="Han C."/>
            <person name="Tapia R."/>
            <person name="Brainard J."/>
            <person name="Schmutz J."/>
            <person name="Larimer F."/>
            <person name="Land M."/>
            <person name="Hauser L."/>
            <person name="Kyrpides N."/>
            <person name="Mikhailova N."/>
            <person name="Brettar I."/>
            <person name="Klappenbach J."/>
            <person name="Konstantinidis K."/>
            <person name="Rodrigues J."/>
            <person name="Tiedje J."/>
            <person name="Richardson P."/>
        </authorList>
    </citation>
    <scope>NUCLEOTIDE SEQUENCE [LARGE SCALE GENOMIC DNA]</scope>
    <source>
        <strain>OS155 / ATCC BAA-1091</strain>
    </source>
</reference>